<organism>
    <name type="scientific">Arabidopsis thaliana</name>
    <name type="common">Mouse-ear cress</name>
    <dbReference type="NCBI Taxonomy" id="3702"/>
    <lineage>
        <taxon>Eukaryota</taxon>
        <taxon>Viridiplantae</taxon>
        <taxon>Streptophyta</taxon>
        <taxon>Embryophyta</taxon>
        <taxon>Tracheophyta</taxon>
        <taxon>Spermatophyta</taxon>
        <taxon>Magnoliopsida</taxon>
        <taxon>eudicotyledons</taxon>
        <taxon>Gunneridae</taxon>
        <taxon>Pentapetalae</taxon>
        <taxon>rosids</taxon>
        <taxon>malvids</taxon>
        <taxon>Brassicales</taxon>
        <taxon>Brassicaceae</taxon>
        <taxon>Camelineae</taxon>
        <taxon>Arabidopsis</taxon>
    </lineage>
</organism>
<comment type="function">
    <text evidence="4">Acts as an osmosensitive calcium-permeable cation channel.</text>
</comment>
<comment type="subcellular location">
    <subcellularLocation>
        <location evidence="3">Golgi apparatus membrane</location>
        <topology evidence="3">Multi-pass membrane protein</topology>
    </subcellularLocation>
    <subcellularLocation>
        <location evidence="3">Cell membrane</location>
        <topology evidence="3">Multi-pass membrane protein</topology>
    </subcellularLocation>
</comment>
<comment type="similarity">
    <text evidence="6">Belongs to the CSC1 (TC 1.A.17) family.</text>
</comment>
<comment type="sequence caution" evidence="6">
    <conflict type="erroneous gene model prediction">
        <sequence resource="EMBL-CDS" id="AAG50793"/>
    </conflict>
</comment>
<accession>Q9FVQ5</accession>
<accession>I1VCA2</accession>
<accession>Q9C6X4</accession>
<sequence>MATLQDIGVSALINLFGAFLFLIAFAVLRIQPINDRVYFPKWYLTGERNSPRRSDRTLVGKFVNLNYKTYFTFLNWMPQAMKMSESEIIRHAGLDSAIFLRIYTLGLKIFAPVMVLALVVLVPVNVSSGTLFFLKKELVVSNIDKLSISNVQPKSSKFFFHIAVEYIFTFWACFMLYREYNNVAIMRLQYLASQRRRPEQFTVVVRNVPDMPGHSVPDTVDQFFKTNHPEHYLCHQAVYNANTYAKLVKQRAKLQRWFDYYVLKHQRNPHKQPTCRTGFLGLWGKRVDSIEYYKQQIKEFDHNMSLERQKVLKDSKLMLPVAFVSFDSRWGAAVCAQTQQSKNPTLWLTSSAPEPRDIYWQNLAIPFISLTIRKLVIGVSVFALVFFYMIPIAFVQSLANLEGLDRVAPFLRPVTRLDFIKSFLQGFLPGLALKIFLWILPTVLLIMSKIEGYIALSTLERRAAAKYYYFMLVNVFLGSIIAGTAFEQLHSFLHQSPSQIPRTIGVSIPMKATFFITYIMVDGWAGIAGEILRLKPLVIFHLKNMFIVKTEEDRVRAMDPGFVDFKETIPSLQLYFLLGIVYTAVTPILLPFILIFFAFAYLVYRHQIINVYNQQYESCGAFWPHVHGRIIASLLISQLLLMGLLASKKAADSTPLLIILPILTLSFHKYCKHRFEPAFRQYPLEEAMAKDKLEKETEPELNMKADLADAYLHPIFHSFEKEVELSSSSSSEKETHQEETPEVRVDKHETQSSSPVTELGTSSHHHHVYNSTSPSSHYASAYEQSSSQYEYHYNTHQYEEHEYRYN</sequence>
<name>OSC18_ARATH</name>
<dbReference type="EMBL" id="JQ937229">
    <property type="protein sequence ID" value="AFI41197.1"/>
    <property type="molecule type" value="mRNA"/>
</dbReference>
<dbReference type="EMBL" id="AC074309">
    <property type="protein sequence ID" value="AAG50793.1"/>
    <property type="status" value="ALT_SEQ"/>
    <property type="molecule type" value="Genomic_DNA"/>
</dbReference>
<dbReference type="EMBL" id="AC084165">
    <property type="protein sequence ID" value="AAG23449.1"/>
    <property type="molecule type" value="Genomic_DNA"/>
</dbReference>
<dbReference type="EMBL" id="CP002684">
    <property type="protein sequence ID" value="AEE31435.1"/>
    <property type="molecule type" value="Genomic_DNA"/>
</dbReference>
<dbReference type="EMBL" id="AK229383">
    <property type="protein sequence ID" value="BAF01245.1"/>
    <property type="molecule type" value="mRNA"/>
</dbReference>
<dbReference type="PIR" id="C86445">
    <property type="entry name" value="C86445"/>
</dbReference>
<dbReference type="RefSeq" id="NP_174489.1">
    <property type="nucleotide sequence ID" value="NM_102943.6"/>
</dbReference>
<dbReference type="SMR" id="Q9FVQ5"/>
<dbReference type="FunCoup" id="Q9FVQ5">
    <property type="interactions" value="834"/>
</dbReference>
<dbReference type="STRING" id="3702.Q9FVQ5"/>
<dbReference type="GlyGen" id="Q9FVQ5">
    <property type="glycosylation" value="1 site"/>
</dbReference>
<dbReference type="iPTMnet" id="Q9FVQ5"/>
<dbReference type="PaxDb" id="3702-AT1G32090.1"/>
<dbReference type="ProteomicsDB" id="220354"/>
<dbReference type="EnsemblPlants" id="AT1G32090.1">
    <property type="protein sequence ID" value="AT1G32090.1"/>
    <property type="gene ID" value="AT1G32090"/>
</dbReference>
<dbReference type="GeneID" id="840101"/>
<dbReference type="Gramene" id="AT1G32090.1">
    <property type="protein sequence ID" value="AT1G32090.1"/>
    <property type="gene ID" value="AT1G32090"/>
</dbReference>
<dbReference type="KEGG" id="ath:AT1G32090"/>
<dbReference type="Araport" id="AT1G32090"/>
<dbReference type="TAIR" id="AT1G32090">
    <property type="gene designation" value="OSCA1.8"/>
</dbReference>
<dbReference type="eggNOG" id="KOG1134">
    <property type="taxonomic scope" value="Eukaryota"/>
</dbReference>
<dbReference type="HOGENOM" id="CLU_002458_7_1_1"/>
<dbReference type="InParanoid" id="Q9FVQ5"/>
<dbReference type="OMA" id="DPTQVIW"/>
<dbReference type="OrthoDB" id="1689567at2759"/>
<dbReference type="PhylomeDB" id="Q9FVQ5"/>
<dbReference type="PRO" id="PR:Q9FVQ5"/>
<dbReference type="Proteomes" id="UP000006548">
    <property type="component" value="Chromosome 1"/>
</dbReference>
<dbReference type="ExpressionAtlas" id="Q9FVQ5">
    <property type="expression patterns" value="baseline and differential"/>
</dbReference>
<dbReference type="GO" id="GO:0005794">
    <property type="term" value="C:Golgi apparatus"/>
    <property type="evidence" value="ECO:0007005"/>
    <property type="project" value="TAIR"/>
</dbReference>
<dbReference type="GO" id="GO:0000139">
    <property type="term" value="C:Golgi membrane"/>
    <property type="evidence" value="ECO:0007669"/>
    <property type="project" value="UniProtKB-SubCell"/>
</dbReference>
<dbReference type="GO" id="GO:0005886">
    <property type="term" value="C:plasma membrane"/>
    <property type="evidence" value="ECO:0000314"/>
    <property type="project" value="TAIR"/>
</dbReference>
<dbReference type="GO" id="GO:0009506">
    <property type="term" value="C:plasmodesma"/>
    <property type="evidence" value="ECO:0007005"/>
    <property type="project" value="TAIR"/>
</dbReference>
<dbReference type="GO" id="GO:0005227">
    <property type="term" value="F:calcium-activated cation channel activity"/>
    <property type="evidence" value="ECO:0007669"/>
    <property type="project" value="InterPro"/>
</dbReference>
<dbReference type="GO" id="GO:0008381">
    <property type="term" value="F:mechanosensitive monoatomic ion channel activity"/>
    <property type="evidence" value="ECO:0000314"/>
    <property type="project" value="TAIR"/>
</dbReference>
<dbReference type="InterPro" id="IPR045122">
    <property type="entry name" value="Csc1-like"/>
</dbReference>
<dbReference type="InterPro" id="IPR003864">
    <property type="entry name" value="CSC1/OSCA1-like_7TM"/>
</dbReference>
<dbReference type="InterPro" id="IPR027815">
    <property type="entry name" value="CSC1/OSCA1-like_cyt"/>
</dbReference>
<dbReference type="InterPro" id="IPR032880">
    <property type="entry name" value="Csc1/OSCA1-like_N"/>
</dbReference>
<dbReference type="PANTHER" id="PTHR13018">
    <property type="entry name" value="PROBABLE MEMBRANE PROTEIN DUF221-RELATED"/>
    <property type="match status" value="1"/>
</dbReference>
<dbReference type="PANTHER" id="PTHR13018:SF98">
    <property type="entry name" value="TO DEHYDRATION PROTEIN, PUTATIVE, EXPRESSED-RELATED"/>
    <property type="match status" value="1"/>
</dbReference>
<dbReference type="Pfam" id="PF14703">
    <property type="entry name" value="PHM7_cyt"/>
    <property type="match status" value="1"/>
</dbReference>
<dbReference type="Pfam" id="PF02714">
    <property type="entry name" value="RSN1_7TM"/>
    <property type="match status" value="1"/>
</dbReference>
<dbReference type="Pfam" id="PF13967">
    <property type="entry name" value="RSN1_TM"/>
    <property type="match status" value="1"/>
</dbReference>
<feature type="chain" id="PRO_0000429799" description="Hyperosmolality-gated Ca2+ permeable channel 1.8">
    <location>
        <begin position="1"/>
        <end position="806"/>
    </location>
</feature>
<feature type="transmembrane region" description="Helical" evidence="1">
    <location>
        <begin position="7"/>
        <end position="27"/>
    </location>
</feature>
<feature type="transmembrane region" description="Helical" evidence="1">
    <location>
        <begin position="102"/>
        <end position="122"/>
    </location>
</feature>
<feature type="transmembrane region" description="Helical" evidence="1">
    <location>
        <begin position="157"/>
        <end position="177"/>
    </location>
</feature>
<feature type="transmembrane region" description="Helical" evidence="1">
    <location>
        <begin position="375"/>
        <end position="395"/>
    </location>
</feature>
<feature type="transmembrane region" description="Helical" evidence="1">
    <location>
        <begin position="427"/>
        <end position="447"/>
    </location>
</feature>
<feature type="transmembrane region" description="Helical" evidence="1">
    <location>
        <begin position="467"/>
        <end position="487"/>
    </location>
</feature>
<feature type="transmembrane region" description="Helical" evidence="1">
    <location>
        <begin position="512"/>
        <end position="532"/>
    </location>
</feature>
<feature type="transmembrane region" description="Helical" evidence="1">
    <location>
        <begin position="576"/>
        <end position="596"/>
    </location>
</feature>
<feature type="transmembrane region" description="Helical" evidence="1">
    <location>
        <begin position="626"/>
        <end position="646"/>
    </location>
</feature>
<feature type="transmembrane region" description="Helical" evidence="1">
    <location>
        <begin position="650"/>
        <end position="670"/>
    </location>
</feature>
<feature type="region of interest" description="Disordered" evidence="2">
    <location>
        <begin position="726"/>
        <end position="786"/>
    </location>
</feature>
<feature type="compositionally biased region" description="Basic and acidic residues" evidence="2">
    <location>
        <begin position="731"/>
        <end position="750"/>
    </location>
</feature>
<feature type="compositionally biased region" description="Polar residues" evidence="2">
    <location>
        <begin position="751"/>
        <end position="762"/>
    </location>
</feature>
<feature type="compositionally biased region" description="Low complexity" evidence="2">
    <location>
        <begin position="775"/>
        <end position="786"/>
    </location>
</feature>
<feature type="modified residue" description="Phosphothreonine" evidence="7">
    <location>
        <position position="735"/>
    </location>
</feature>
<feature type="sequence conflict" description="In Ref. 1; AFI41197." evidence="6" ref="1">
    <original>L</original>
    <variation>I</variation>
    <location>
        <position position="456"/>
    </location>
</feature>
<feature type="sequence conflict" description="In Ref. 1; AFI41197." evidence="6" ref="1">
    <original>I</original>
    <variation>V</variation>
    <location>
        <position position="662"/>
    </location>
</feature>
<feature type="sequence conflict" description="In Ref. 1; AFI41197." evidence="6" ref="1">
    <original>S</original>
    <variation>P</variation>
    <location>
        <position position="762"/>
    </location>
</feature>
<feature type="sequence conflict" description="In Ref. 1; AFI41197." evidence="6" ref="1">
    <original>T</original>
    <variation>I</variation>
    <location>
        <position position="795"/>
    </location>
</feature>
<gene>
    <name evidence="5" type="primary">OSCA1.8</name>
    <name type="ordered locus">At1g32090</name>
    <name type="ORF">F3C3.11</name>
    <name type="ORF">T12O21.1</name>
</gene>
<proteinExistence type="evidence at protein level"/>
<evidence type="ECO:0000255" key="1"/>
<evidence type="ECO:0000256" key="2">
    <source>
        <dbReference type="SAM" id="MobiDB-lite"/>
    </source>
</evidence>
<evidence type="ECO:0000269" key="3">
    <source>
    </source>
</evidence>
<evidence type="ECO:0000269" key="4">
    <source>
    </source>
</evidence>
<evidence type="ECO:0000303" key="5">
    <source>
    </source>
</evidence>
<evidence type="ECO:0000305" key="6"/>
<evidence type="ECO:0007744" key="7">
    <source>
    </source>
</evidence>
<protein>
    <recommendedName>
        <fullName evidence="5">Hyperosmolality-gated Ca2+ permeable channel 1.8</fullName>
        <shortName evidence="5">AtOSCA1.8</shortName>
    </recommendedName>
</protein>
<reference key="1">
    <citation type="journal article" date="2012" name="Plant Physiol.">
        <title>Isolation and proteomic characterization of the Arabidopsis Golgi defines functional and novel components involved in plant cell wall biosynthesis.</title>
        <authorList>
            <person name="Parsons H.T."/>
            <person name="Christiansen K."/>
            <person name="Knierim B."/>
            <person name="Carroll A."/>
            <person name="Ito J."/>
            <person name="Batth T.S."/>
            <person name="Smith-Moritz A.M."/>
            <person name="Morrison S."/>
            <person name="McInerney P."/>
            <person name="Hadi M.Z."/>
            <person name="Auer M."/>
            <person name="Mukhopadhyay A."/>
            <person name="Petzold C.J."/>
            <person name="Scheller H.V."/>
            <person name="Loque D."/>
            <person name="Heazlewood J.L."/>
        </authorList>
    </citation>
    <scope>NUCLEOTIDE SEQUENCE [MRNA]</scope>
    <scope>SUBCELLULAR LOCATION</scope>
    <source>
        <strain>cv. Landsberg erecta</strain>
    </source>
</reference>
<reference key="2">
    <citation type="journal article" date="2000" name="Nature">
        <title>Sequence and analysis of chromosome 1 of the plant Arabidopsis thaliana.</title>
        <authorList>
            <person name="Theologis A."/>
            <person name="Ecker J.R."/>
            <person name="Palm C.J."/>
            <person name="Federspiel N.A."/>
            <person name="Kaul S."/>
            <person name="White O."/>
            <person name="Alonso J."/>
            <person name="Altafi H."/>
            <person name="Araujo R."/>
            <person name="Bowman C.L."/>
            <person name="Brooks S.Y."/>
            <person name="Buehler E."/>
            <person name="Chan A."/>
            <person name="Chao Q."/>
            <person name="Chen H."/>
            <person name="Cheuk R.F."/>
            <person name="Chin C.W."/>
            <person name="Chung M.K."/>
            <person name="Conn L."/>
            <person name="Conway A.B."/>
            <person name="Conway A.R."/>
            <person name="Creasy T.H."/>
            <person name="Dewar K."/>
            <person name="Dunn P."/>
            <person name="Etgu P."/>
            <person name="Feldblyum T.V."/>
            <person name="Feng J.-D."/>
            <person name="Fong B."/>
            <person name="Fujii C.Y."/>
            <person name="Gill J.E."/>
            <person name="Goldsmith A.D."/>
            <person name="Haas B."/>
            <person name="Hansen N.F."/>
            <person name="Hughes B."/>
            <person name="Huizar L."/>
            <person name="Hunter J.L."/>
            <person name="Jenkins J."/>
            <person name="Johnson-Hopson C."/>
            <person name="Khan S."/>
            <person name="Khaykin E."/>
            <person name="Kim C.J."/>
            <person name="Koo H.L."/>
            <person name="Kremenetskaia I."/>
            <person name="Kurtz D.B."/>
            <person name="Kwan A."/>
            <person name="Lam B."/>
            <person name="Langin-Hooper S."/>
            <person name="Lee A."/>
            <person name="Lee J.M."/>
            <person name="Lenz C.A."/>
            <person name="Li J.H."/>
            <person name="Li Y.-P."/>
            <person name="Lin X."/>
            <person name="Liu S.X."/>
            <person name="Liu Z.A."/>
            <person name="Luros J.S."/>
            <person name="Maiti R."/>
            <person name="Marziali A."/>
            <person name="Militscher J."/>
            <person name="Miranda M."/>
            <person name="Nguyen M."/>
            <person name="Nierman W.C."/>
            <person name="Osborne B.I."/>
            <person name="Pai G."/>
            <person name="Peterson J."/>
            <person name="Pham P.K."/>
            <person name="Rizzo M."/>
            <person name="Rooney T."/>
            <person name="Rowley D."/>
            <person name="Sakano H."/>
            <person name="Salzberg S.L."/>
            <person name="Schwartz J.R."/>
            <person name="Shinn P."/>
            <person name="Southwick A.M."/>
            <person name="Sun H."/>
            <person name="Tallon L.J."/>
            <person name="Tambunga G."/>
            <person name="Toriumi M.J."/>
            <person name="Town C.D."/>
            <person name="Utterback T."/>
            <person name="Van Aken S."/>
            <person name="Vaysberg M."/>
            <person name="Vysotskaia V.S."/>
            <person name="Walker M."/>
            <person name="Wu D."/>
            <person name="Yu G."/>
            <person name="Fraser C.M."/>
            <person name="Venter J.C."/>
            <person name="Davis R.W."/>
        </authorList>
    </citation>
    <scope>NUCLEOTIDE SEQUENCE [LARGE SCALE GENOMIC DNA]</scope>
    <source>
        <strain>cv. Columbia</strain>
    </source>
</reference>
<reference key="3">
    <citation type="journal article" date="2017" name="Plant J.">
        <title>Araport11: a complete reannotation of the Arabidopsis thaliana reference genome.</title>
        <authorList>
            <person name="Cheng C.Y."/>
            <person name="Krishnakumar V."/>
            <person name="Chan A.P."/>
            <person name="Thibaud-Nissen F."/>
            <person name="Schobel S."/>
            <person name="Town C.D."/>
        </authorList>
    </citation>
    <scope>GENOME REANNOTATION</scope>
    <source>
        <strain>cv. Columbia</strain>
    </source>
</reference>
<reference key="4">
    <citation type="submission" date="2006-07" db="EMBL/GenBank/DDBJ databases">
        <title>Large-scale analysis of RIKEN Arabidopsis full-length (RAFL) cDNAs.</title>
        <authorList>
            <person name="Totoki Y."/>
            <person name="Seki M."/>
            <person name="Ishida J."/>
            <person name="Nakajima M."/>
            <person name="Enju A."/>
            <person name="Kamiya A."/>
            <person name="Narusaka M."/>
            <person name="Shin-i T."/>
            <person name="Nakagawa M."/>
            <person name="Sakamoto N."/>
            <person name="Oishi K."/>
            <person name="Kohara Y."/>
            <person name="Kobayashi M."/>
            <person name="Toyoda A."/>
            <person name="Sakaki Y."/>
            <person name="Sakurai T."/>
            <person name="Iida K."/>
            <person name="Akiyama K."/>
            <person name="Satou M."/>
            <person name="Toyoda T."/>
            <person name="Konagaya A."/>
            <person name="Carninci P."/>
            <person name="Kawai J."/>
            <person name="Hayashizaki Y."/>
            <person name="Shinozaki K."/>
        </authorList>
    </citation>
    <scope>NUCLEOTIDE SEQUENCE [LARGE SCALE MRNA]</scope>
    <source>
        <strain>cv. Columbia</strain>
    </source>
</reference>
<reference key="5">
    <citation type="journal article" date="2003" name="Mol. Cell. Proteomics">
        <title>Large-scale analysis of in vivo phosphorylated membrane proteins by immobilized metal ion affinity chromatography and mass spectrometry.</title>
        <authorList>
            <person name="Nuehse T.S."/>
            <person name="Stensballe A."/>
            <person name="Jensen O.N."/>
            <person name="Peck S.C."/>
        </authorList>
    </citation>
    <scope>PHOSPHORYLATION [LARGE SCALE ANALYSIS] AT THR-735</scope>
    <scope>IDENTIFICATION BY MASS SPECTROMETRY [LARGE SCALE ANALYSIS]</scope>
    <source>
        <strain>cv. La-0</strain>
    </source>
</reference>
<reference key="6">
    <citation type="journal article" date="2004" name="Plant Cell">
        <title>Phosphoproteomics of the Arabidopsis plasma membrane and a new phosphorylation site database.</title>
        <authorList>
            <person name="Nuehse T.S."/>
            <person name="Stensballe A."/>
            <person name="Jensen O.N."/>
            <person name="Peck S.C."/>
        </authorList>
    </citation>
    <scope>IDENTIFICATION BY MASS SPECTROMETRY [LARGE SCALE ANALYSIS]</scope>
</reference>
<reference key="7">
    <citation type="journal article" date="2014" name="Cell Res.">
        <title>DUF221 proteins are a family of osmosensitive calcium-permeable cation channels conserved across eukaryotes.</title>
        <authorList>
            <person name="Hou C."/>
            <person name="Tian W."/>
            <person name="Kleist T."/>
            <person name="He K."/>
            <person name="Garcia V."/>
            <person name="Bai F."/>
            <person name="Hao Y."/>
            <person name="Luan S."/>
            <person name="Li L."/>
        </authorList>
    </citation>
    <scope>GENE FAMILY</scope>
</reference>
<reference key="8">
    <citation type="journal article" date="2018" name="Elife">
        <title>OSCA/TMEM63 are an Evolutionarily Conserved Family of Mechanically Activated Ion Channels.</title>
        <authorList>
            <person name="Murthy S.E."/>
            <person name="Dubin A.E."/>
            <person name="Whitwam T."/>
            <person name="Jojoa-Cruz S."/>
            <person name="Cahalan S.M."/>
            <person name="Mousavi S.A.R."/>
            <person name="Ward A.B."/>
            <person name="Patapoutian A."/>
        </authorList>
    </citation>
    <scope>FUNCTION</scope>
</reference>
<keyword id="KW-0106">Calcium</keyword>
<keyword id="KW-1003">Cell membrane</keyword>
<keyword id="KW-0333">Golgi apparatus</keyword>
<keyword id="KW-0407">Ion channel</keyword>
<keyword id="KW-0406">Ion transport</keyword>
<keyword id="KW-0472">Membrane</keyword>
<keyword id="KW-0597">Phosphoprotein</keyword>
<keyword id="KW-1185">Reference proteome</keyword>
<keyword id="KW-0812">Transmembrane</keyword>
<keyword id="KW-1133">Transmembrane helix</keyword>
<keyword id="KW-0813">Transport</keyword>